<evidence type="ECO:0000255" key="1">
    <source>
        <dbReference type="HAMAP-Rule" id="MF_00643"/>
    </source>
</evidence>
<feature type="chain" id="PRO_0000200352" description="Cytochrome b559 subunit beta">
    <location>
        <begin position="1"/>
        <end position="39"/>
    </location>
</feature>
<feature type="transmembrane region" description="Helical" evidence="1">
    <location>
        <begin position="14"/>
        <end position="30"/>
    </location>
</feature>
<feature type="binding site" description="axial binding residue" evidence="1">
    <location>
        <position position="18"/>
    </location>
    <ligand>
        <name>heme</name>
        <dbReference type="ChEBI" id="CHEBI:30413"/>
        <note>ligand shared with alpha subunit</note>
    </ligand>
    <ligandPart>
        <name>Fe</name>
        <dbReference type="ChEBI" id="CHEBI:18248"/>
    </ligandPart>
</feature>
<sequence>MTIDRTYPIFTVRWLAVHGLAVPTVFFLGSISAMQFIQR</sequence>
<protein>
    <recommendedName>
        <fullName evidence="1">Cytochrome b559 subunit beta</fullName>
    </recommendedName>
    <alternativeName>
        <fullName evidence="1">PSII reaction center subunit VI</fullName>
    </alternativeName>
</protein>
<gene>
    <name evidence="1" type="primary">psbF</name>
</gene>
<reference key="1">
    <citation type="journal article" date="2000" name="Am. J. Bot.">
        <title>Utility of 17 chloroplast genes for inferring the phylogeny of the basal angiosperms.</title>
        <authorList>
            <person name="Graham S.W."/>
            <person name="Olmstead R.G."/>
        </authorList>
    </citation>
    <scope>NUCLEOTIDE SEQUENCE [GENOMIC DNA]</scope>
</reference>
<reference key="2">
    <citation type="journal article" date="2003" name="Mol. Biol. Evol.">
        <title>Analysis of the Amborella trichopoda chloroplast genome sequence suggests that Amborella is not a basal angiosperm.</title>
        <authorList>
            <person name="Goremykin V.V."/>
            <person name="Hirsch-Ernst K.I."/>
            <person name="Wolfl S."/>
            <person name="Hellwig F.H."/>
        </authorList>
    </citation>
    <scope>NUCLEOTIDE SEQUENCE [LARGE SCALE GENOMIC DNA]</scope>
</reference>
<keyword id="KW-0150">Chloroplast</keyword>
<keyword id="KW-0249">Electron transport</keyword>
<keyword id="KW-0349">Heme</keyword>
<keyword id="KW-0408">Iron</keyword>
<keyword id="KW-0472">Membrane</keyword>
<keyword id="KW-0479">Metal-binding</keyword>
<keyword id="KW-0602">Photosynthesis</keyword>
<keyword id="KW-0604">Photosystem II</keyword>
<keyword id="KW-0934">Plastid</keyword>
<keyword id="KW-1185">Reference proteome</keyword>
<keyword id="KW-0793">Thylakoid</keyword>
<keyword id="KW-0812">Transmembrane</keyword>
<keyword id="KW-1133">Transmembrane helix</keyword>
<keyword id="KW-0813">Transport</keyword>
<organism>
    <name type="scientific">Amborella trichopoda</name>
    <dbReference type="NCBI Taxonomy" id="13333"/>
    <lineage>
        <taxon>Eukaryota</taxon>
        <taxon>Viridiplantae</taxon>
        <taxon>Streptophyta</taxon>
        <taxon>Embryophyta</taxon>
        <taxon>Tracheophyta</taxon>
        <taxon>Spermatophyta</taxon>
        <taxon>Magnoliopsida</taxon>
        <taxon>Amborellales</taxon>
        <taxon>Amborellaceae</taxon>
        <taxon>Amborella</taxon>
    </lineage>
</organism>
<comment type="function">
    <text evidence="1">This b-type cytochrome is tightly associated with the reaction center of photosystem II (PSII). PSII is a light-driven water:plastoquinone oxidoreductase that uses light energy to abstract electrons from H(2)O, generating O(2) and a proton gradient subsequently used for ATP formation. It consists of a core antenna complex that captures photons, and an electron transfer chain that converts photonic excitation into a charge separation.</text>
</comment>
<comment type="cofactor">
    <cofactor evidence="1">
        <name>heme b</name>
        <dbReference type="ChEBI" id="CHEBI:60344"/>
    </cofactor>
    <text evidence="1">With its partner (PsbE) binds heme. PSII binds additional chlorophylls, carotenoids and specific lipids.</text>
</comment>
<comment type="subunit">
    <text evidence="1">Heterodimer of an alpha subunit and a beta subunit. PSII is composed of 1 copy each of membrane proteins PsbA, PsbB, PsbC, PsbD, PsbE, PsbF, PsbH, PsbI, PsbJ, PsbK, PsbL, PsbM, PsbT, PsbX, PsbY, PsbZ, Psb30/Ycf12, at least 3 peripheral proteins of the oxygen-evolving complex and a large number of cofactors. It forms dimeric complexes.</text>
</comment>
<comment type="subcellular location">
    <subcellularLocation>
        <location evidence="1">Plastid</location>
        <location evidence="1">Chloroplast thylakoid membrane</location>
        <topology evidence="1">Single-pass membrane protein</topology>
    </subcellularLocation>
</comment>
<comment type="similarity">
    <text evidence="1">Belongs to the PsbE/PsbF family.</text>
</comment>
<accession>P60248</accession>
<accession>Q7IR74</accession>
<dbReference type="EMBL" id="AF235044">
    <property type="protein sequence ID" value="AAG44377.1"/>
    <property type="molecule type" value="Genomic_DNA"/>
</dbReference>
<dbReference type="EMBL" id="AJ506156">
    <property type="protein sequence ID" value="CAD45122.1"/>
    <property type="molecule type" value="Genomic_DNA"/>
</dbReference>
<dbReference type="RefSeq" id="NP_904115.1">
    <property type="nucleotide sequence ID" value="NC_005086.1"/>
</dbReference>
<dbReference type="SMR" id="P60248"/>
<dbReference type="STRING" id="13333.P60248"/>
<dbReference type="GeneID" id="2546575"/>
<dbReference type="KEGG" id="atr:2546575"/>
<dbReference type="OrthoDB" id="77at2759"/>
<dbReference type="Proteomes" id="UP000017836">
    <property type="component" value="Chloroplast"/>
</dbReference>
<dbReference type="GO" id="GO:0009535">
    <property type="term" value="C:chloroplast thylakoid membrane"/>
    <property type="evidence" value="ECO:0007669"/>
    <property type="project" value="UniProtKB-SubCell"/>
</dbReference>
<dbReference type="GO" id="GO:0009539">
    <property type="term" value="C:photosystem II reaction center"/>
    <property type="evidence" value="ECO:0007669"/>
    <property type="project" value="InterPro"/>
</dbReference>
<dbReference type="GO" id="GO:0009055">
    <property type="term" value="F:electron transfer activity"/>
    <property type="evidence" value="ECO:0007669"/>
    <property type="project" value="UniProtKB-UniRule"/>
</dbReference>
<dbReference type="GO" id="GO:0020037">
    <property type="term" value="F:heme binding"/>
    <property type="evidence" value="ECO:0007669"/>
    <property type="project" value="InterPro"/>
</dbReference>
<dbReference type="GO" id="GO:0005506">
    <property type="term" value="F:iron ion binding"/>
    <property type="evidence" value="ECO:0007669"/>
    <property type="project" value="UniProtKB-UniRule"/>
</dbReference>
<dbReference type="GO" id="GO:0009767">
    <property type="term" value="P:photosynthetic electron transport chain"/>
    <property type="evidence" value="ECO:0007669"/>
    <property type="project" value="InterPro"/>
</dbReference>
<dbReference type="HAMAP" id="MF_00643">
    <property type="entry name" value="PSII_PsbF"/>
    <property type="match status" value="1"/>
</dbReference>
<dbReference type="InterPro" id="IPR006241">
    <property type="entry name" value="PSII_cyt_b559_bsu"/>
</dbReference>
<dbReference type="InterPro" id="IPR006216">
    <property type="entry name" value="PSII_cyt_b559_CS"/>
</dbReference>
<dbReference type="InterPro" id="IPR013081">
    <property type="entry name" value="PSII_cyt_b559_N"/>
</dbReference>
<dbReference type="NCBIfam" id="TIGR01333">
    <property type="entry name" value="cyt_b559_beta"/>
    <property type="match status" value="1"/>
</dbReference>
<dbReference type="Pfam" id="PF00283">
    <property type="entry name" value="Cytochrom_B559"/>
    <property type="match status" value="1"/>
</dbReference>
<dbReference type="PIRSF" id="PIRSF000037">
    <property type="entry name" value="PsbF"/>
    <property type="match status" value="1"/>
</dbReference>
<dbReference type="SUPFAM" id="SSF161045">
    <property type="entry name" value="Cytochrome b559 subunits"/>
    <property type="match status" value="1"/>
</dbReference>
<dbReference type="PROSITE" id="PS00537">
    <property type="entry name" value="CYTOCHROME_B559"/>
    <property type="match status" value="1"/>
</dbReference>
<name>PSBF_AMBTC</name>
<proteinExistence type="inferred from homology"/>
<geneLocation type="chloroplast"/>